<accession>Q4R354</accession>
<gene>
    <name type="primary">EIF1AD</name>
    <name type="ORF">QtsA-19433</name>
</gene>
<proteinExistence type="evidence at transcript level"/>
<organism>
    <name type="scientific">Macaca fascicularis</name>
    <name type="common">Crab-eating macaque</name>
    <name type="synonym">Cynomolgus monkey</name>
    <dbReference type="NCBI Taxonomy" id="9541"/>
    <lineage>
        <taxon>Eukaryota</taxon>
        <taxon>Metazoa</taxon>
        <taxon>Chordata</taxon>
        <taxon>Craniata</taxon>
        <taxon>Vertebrata</taxon>
        <taxon>Euteleostomi</taxon>
        <taxon>Mammalia</taxon>
        <taxon>Eutheria</taxon>
        <taxon>Euarchontoglires</taxon>
        <taxon>Primates</taxon>
        <taxon>Haplorrhini</taxon>
        <taxon>Catarrhini</taxon>
        <taxon>Cercopithecidae</taxon>
        <taxon>Cercopithecinae</taxon>
        <taxon>Macaca</taxon>
    </lineage>
</organism>
<name>EIF1A_MACFA</name>
<reference key="1">
    <citation type="submission" date="2005-06" db="EMBL/GenBank/DDBJ databases">
        <title>DNA sequences of macaque genes expressed in brain or testis and its evolutionary implications.</title>
        <authorList>
            <consortium name="International consortium for macaque cDNA sequencing and analysis"/>
        </authorList>
    </citation>
    <scope>NUCLEOTIDE SEQUENCE [LARGE SCALE MRNA]</scope>
    <source>
        <tissue>Testis</tissue>
    </source>
</reference>
<comment type="function">
    <text evidence="1">Plays a role into cellular response to oxidative stress. Decreases cell proliferation (By similarity).</text>
</comment>
<comment type="subunit">
    <text evidence="1">Interacts with GAPDH and STAT1.</text>
</comment>
<comment type="subcellular location">
    <subcellularLocation>
        <location evidence="1">Nucleus</location>
    </subcellularLocation>
</comment>
<comment type="similarity">
    <text evidence="8">Belongs to the EIF1AD family.</text>
</comment>
<feature type="chain" id="PRO_0000314152" description="Probable RNA-binding protein EIF1AD">
    <location>
        <begin position="1"/>
        <end position="165"/>
    </location>
</feature>
<feature type="domain" description="S1-like" evidence="6">
    <location>
        <begin position="5"/>
        <end position="89"/>
    </location>
</feature>
<feature type="region of interest" description="Disordered" evidence="7">
    <location>
        <begin position="112"/>
        <end position="165"/>
    </location>
</feature>
<feature type="short sequence motif" description="Nuclear localization signal" evidence="5">
    <location>
        <begin position="6"/>
        <end position="12"/>
    </location>
</feature>
<feature type="short sequence motif" description="Nuclear localization signal" evidence="5">
    <location>
        <begin position="56"/>
        <end position="65"/>
    </location>
</feature>
<feature type="compositionally biased region" description="Acidic residues" evidence="7">
    <location>
        <begin position="155"/>
        <end position="165"/>
    </location>
</feature>
<feature type="modified residue" description="Phosphothreonine" evidence="4">
    <location>
        <position position="33"/>
    </location>
</feature>
<feature type="modified residue" description="Phosphoserine" evidence="2">
    <location>
        <position position="131"/>
    </location>
</feature>
<feature type="modified residue" description="Phosphoserine" evidence="3">
    <location>
        <position position="135"/>
    </location>
</feature>
<feature type="modified residue" description="Phosphoserine" evidence="2">
    <location>
        <position position="136"/>
    </location>
</feature>
<feature type="modified residue" description="Phosphoserine" evidence="3">
    <location>
        <position position="137"/>
    </location>
</feature>
<feature type="modified residue" description="Phosphoserine" evidence="4">
    <location>
        <position position="155"/>
    </location>
</feature>
<feature type="modified residue" description="Phosphoserine" evidence="4">
    <location>
        <position position="159"/>
    </location>
</feature>
<protein>
    <recommendedName>
        <fullName>Probable RNA-binding protein EIF1AD</fullName>
    </recommendedName>
    <alternativeName>
        <fullName>Eukaryotic translation initiation factor 1A domain-containing protein</fullName>
    </alternativeName>
</protein>
<sequence>MSQATKRKHVVKEVLGEHIVPSDQQQIVRVLRTPGNNLHEVETAQGQRFLVSMPSKYRKNIWIKRGDFLIVDPIEEGEKVKAEISFVLCKDHVRSLQKEGFWPEAFSEVAEKHNNRNRQTQPELPAEPQLSGEESSSEDDSDLFVNTNRRQYHESEEESEEEEAA</sequence>
<evidence type="ECO:0000250" key="1"/>
<evidence type="ECO:0000250" key="2">
    <source>
        <dbReference type="UniProtKB" id="Q3THJ3"/>
    </source>
</evidence>
<evidence type="ECO:0000250" key="3">
    <source>
        <dbReference type="UniProtKB" id="Q5RKI6"/>
    </source>
</evidence>
<evidence type="ECO:0000250" key="4">
    <source>
        <dbReference type="UniProtKB" id="Q8N9N8"/>
    </source>
</evidence>
<evidence type="ECO:0000255" key="5"/>
<evidence type="ECO:0000255" key="6">
    <source>
        <dbReference type="PROSITE-ProRule" id="PRU00181"/>
    </source>
</evidence>
<evidence type="ECO:0000256" key="7">
    <source>
        <dbReference type="SAM" id="MobiDB-lite"/>
    </source>
</evidence>
<evidence type="ECO:0000305" key="8"/>
<dbReference type="EMBL" id="AB179414">
    <property type="protein sequence ID" value="BAE02465.1"/>
    <property type="molecule type" value="mRNA"/>
</dbReference>
<dbReference type="RefSeq" id="NP_001270921.1">
    <property type="nucleotide sequence ID" value="NM_001283992.1"/>
</dbReference>
<dbReference type="RefSeq" id="XP_005577254.1">
    <property type="nucleotide sequence ID" value="XM_005577197.3"/>
</dbReference>
<dbReference type="RefSeq" id="XP_045228089.1">
    <property type="nucleotide sequence ID" value="XM_045372154.1"/>
</dbReference>
<dbReference type="RefSeq" id="XP_045228090.1">
    <property type="nucleotide sequence ID" value="XM_045372155.1"/>
</dbReference>
<dbReference type="RefSeq" id="XP_045228091.1">
    <property type="nucleotide sequence ID" value="XM_045372156.1"/>
</dbReference>
<dbReference type="RefSeq" id="XP_065383997.1">
    <property type="nucleotide sequence ID" value="XM_065527925.1"/>
</dbReference>
<dbReference type="SMR" id="Q4R354"/>
<dbReference type="STRING" id="9541.ENSMFAP00000035458"/>
<dbReference type="Ensembl" id="ENSMFAT00000009667.2">
    <property type="protein sequence ID" value="ENSMFAP00000035431.1"/>
    <property type="gene ID" value="ENSMFAG00000038170.2"/>
</dbReference>
<dbReference type="GeneID" id="101866360"/>
<dbReference type="CTD" id="84285"/>
<dbReference type="VEuPathDB" id="HostDB:ENSMFAG00000038170"/>
<dbReference type="eggNOG" id="KOG2925">
    <property type="taxonomic scope" value="Eukaryota"/>
</dbReference>
<dbReference type="GeneTree" id="ENSGT00390000011180"/>
<dbReference type="OMA" id="FRKNIWV"/>
<dbReference type="Proteomes" id="UP000233100">
    <property type="component" value="Chromosome 14"/>
</dbReference>
<dbReference type="Bgee" id="ENSMFAG00000038170">
    <property type="expression patterns" value="Expressed in skeletal muscle tissue and 13 other cell types or tissues"/>
</dbReference>
<dbReference type="GO" id="GO:0005829">
    <property type="term" value="C:cytosol"/>
    <property type="evidence" value="ECO:0007669"/>
    <property type="project" value="Ensembl"/>
</dbReference>
<dbReference type="GO" id="GO:0005654">
    <property type="term" value="C:nucleoplasm"/>
    <property type="evidence" value="ECO:0007669"/>
    <property type="project" value="Ensembl"/>
</dbReference>
<dbReference type="GO" id="GO:0003723">
    <property type="term" value="F:RNA binding"/>
    <property type="evidence" value="ECO:0007669"/>
    <property type="project" value="UniProtKB-KW"/>
</dbReference>
<dbReference type="GO" id="GO:0003743">
    <property type="term" value="F:translation initiation factor activity"/>
    <property type="evidence" value="ECO:0007669"/>
    <property type="project" value="InterPro"/>
</dbReference>
<dbReference type="CDD" id="cd05792">
    <property type="entry name" value="S1_eIF1AD_like"/>
    <property type="match status" value="1"/>
</dbReference>
<dbReference type="Gene3D" id="1.10.1200.180">
    <property type="match status" value="1"/>
</dbReference>
<dbReference type="Gene3D" id="2.40.50.140">
    <property type="entry name" value="Nucleic acid-binding proteins"/>
    <property type="match status" value="1"/>
</dbReference>
<dbReference type="InterPro" id="IPR039294">
    <property type="entry name" value="EIF1AD"/>
</dbReference>
<dbReference type="InterPro" id="IPR012340">
    <property type="entry name" value="NA-bd_OB-fold"/>
</dbReference>
<dbReference type="InterPro" id="IPR006196">
    <property type="entry name" value="RNA-binding_domain_S1_IF1"/>
</dbReference>
<dbReference type="InterPro" id="IPR001253">
    <property type="entry name" value="TIF_eIF-1A"/>
</dbReference>
<dbReference type="PANTHER" id="PTHR21641:SF0">
    <property type="entry name" value="RNA-BINDING PROTEIN EIF1AD-RELATED"/>
    <property type="match status" value="1"/>
</dbReference>
<dbReference type="PANTHER" id="PTHR21641">
    <property type="entry name" value="TRANSLATION INITIATION FACTOR-RELATED"/>
    <property type="match status" value="1"/>
</dbReference>
<dbReference type="Pfam" id="PF01176">
    <property type="entry name" value="eIF-1a"/>
    <property type="match status" value="1"/>
</dbReference>
<dbReference type="SMART" id="SM00652">
    <property type="entry name" value="eIF1a"/>
    <property type="match status" value="1"/>
</dbReference>
<dbReference type="SUPFAM" id="SSF50249">
    <property type="entry name" value="Nucleic acid-binding proteins"/>
    <property type="match status" value="1"/>
</dbReference>
<dbReference type="PROSITE" id="PS50832">
    <property type="entry name" value="S1_IF1_TYPE"/>
    <property type="match status" value="1"/>
</dbReference>
<keyword id="KW-0539">Nucleus</keyword>
<keyword id="KW-0597">Phosphoprotein</keyword>
<keyword id="KW-1185">Reference proteome</keyword>
<keyword id="KW-0694">RNA-binding</keyword>